<reference key="1">
    <citation type="journal article" date="2000" name="J. Bacteriol.">
        <title>Identification, cloning, and initial characterization of rot, a locus encoding a regulator of virulence factor expression in Staphylococcus aureus.</title>
        <authorList>
            <person name="McNamara P.J."/>
            <person name="Milligan-Monroe K.C."/>
            <person name="Khalili S."/>
            <person name="Proctor R.A."/>
        </authorList>
    </citation>
    <scope>NUCLEOTIDE SEQUENCE [GENOMIC DNA]</scope>
    <scope>FUNCTION</scope>
</reference>
<reference key="2">
    <citation type="book" date="2006" name="Gram positive pathogens, 2nd edition">
        <title>The Staphylococcus aureus NCTC 8325 genome.</title>
        <editorList>
            <person name="Fischetti V."/>
            <person name="Novick R."/>
            <person name="Ferretti J."/>
            <person name="Portnoy D."/>
            <person name="Rood J."/>
        </editorList>
        <authorList>
            <person name="Gillaspy A.F."/>
            <person name="Worrell V."/>
            <person name="Orvis J."/>
            <person name="Roe B.A."/>
            <person name="Dyer D.W."/>
            <person name="Iandolo J.J."/>
        </authorList>
    </citation>
    <scope>NUCLEOTIDE SEQUENCE [LARGE SCALE GENOMIC DNA]</scope>
    <source>
        <strain>NCTC 8325 / PS 47</strain>
    </source>
</reference>
<reference key="3">
    <citation type="journal article" date="2003" name="J. Bacteriol.">
        <title>Global regulation of Staphylococcus aureus genes by Rot.</title>
        <authorList>
            <person name="Said-Salim B."/>
            <person name="Dunman P.M."/>
            <person name="McAleese F.M."/>
            <person name="Macapagal D."/>
            <person name="Murphy E."/>
            <person name="McNamara P.J."/>
            <person name="Arvidson S."/>
            <person name="Foster T.J."/>
            <person name="Projan S.J."/>
            <person name="Kreiswirth B.N."/>
        </authorList>
    </citation>
    <scope>FUNCTION</scope>
</reference>
<reference key="4">
    <citation type="journal article" date="2004" name="J. Bacteriol.">
        <title>Accessory gene regulator control of staphyloccoccal enterotoxin D gene expression.</title>
        <authorList>
            <person name="Tseng C.W."/>
            <person name="Zhang S."/>
            <person name="Stewart G.C."/>
        </authorList>
    </citation>
    <scope>FUNCTION</scope>
    <scope>REGULATION BY AGR</scope>
</reference>
<sequence length="166" mass="19371">MHKLAHTSFGIVGMFVNTCIVAKYVIINWEMFSMKKVNNDTVFGILQLETLLGDINSIFSEIESEYKMSREEILILLTLWQKGSMTLKEMDRFVEVKPYKRTRTYNNLVELEWIYKERPVDDERTVIIHFNEKLQQEKVELLNFISDAIASRATAMQNSLNAIIAV</sequence>
<protein>
    <recommendedName>
        <fullName>HTH-type transcriptional regulator rot</fullName>
    </recommendedName>
    <alternativeName>
        <fullName>Repressor of toxins</fullName>
    </alternativeName>
</protein>
<organism>
    <name type="scientific">Staphylococcus aureus (strain NCTC 8325 / PS 47)</name>
    <dbReference type="NCBI Taxonomy" id="93061"/>
    <lineage>
        <taxon>Bacteria</taxon>
        <taxon>Bacillati</taxon>
        <taxon>Bacillota</taxon>
        <taxon>Bacilli</taxon>
        <taxon>Bacillales</taxon>
        <taxon>Staphylococcaceae</taxon>
        <taxon>Staphylococcus</taxon>
    </lineage>
</organism>
<evidence type="ECO:0000255" key="1"/>
<evidence type="ECO:0000269" key="2">
    <source>
    </source>
</evidence>
<evidence type="ECO:0000269" key="3">
    <source>
    </source>
</evidence>
<evidence type="ECO:0000269" key="4">
    <source>
    </source>
</evidence>
<evidence type="ECO:0000305" key="5"/>
<feature type="chain" id="PRO_0000220543" description="HTH-type transcriptional regulator rot">
    <location>
        <begin position="1"/>
        <end position="166"/>
    </location>
</feature>
<feature type="DNA-binding region" description="H-T-H motif" evidence="1">
    <location>
        <begin position="87"/>
        <end position="110"/>
    </location>
</feature>
<feature type="sequence conflict" description="In Ref. 1; AAF22306." evidence="5" ref="1">
    <original>S</original>
    <variation>F</variation>
    <location>
        <position position="84"/>
    </location>
</feature>
<dbReference type="EMBL" id="AF189239">
    <property type="protein sequence ID" value="AAF22306.1"/>
    <property type="molecule type" value="Genomic_DNA"/>
</dbReference>
<dbReference type="EMBL" id="CP000253">
    <property type="protein sequence ID" value="ABD30944.1"/>
    <property type="status" value="ALT_INIT"/>
    <property type="molecule type" value="Genomic_DNA"/>
</dbReference>
<dbReference type="RefSeq" id="YP_500382.1">
    <property type="nucleotide sequence ID" value="NC_007795.1"/>
</dbReference>
<dbReference type="SMR" id="Q9RFJ6"/>
<dbReference type="STRING" id="93061.SAOUHSC_01879"/>
<dbReference type="PaxDb" id="1280-SAXN108_1793"/>
<dbReference type="GeneID" id="3921768"/>
<dbReference type="KEGG" id="sao:SAOUHSC_01879"/>
<dbReference type="PATRIC" id="fig|93061.5.peg.1711"/>
<dbReference type="eggNOG" id="COG1846">
    <property type="taxonomic scope" value="Bacteria"/>
</dbReference>
<dbReference type="HOGENOM" id="CLU_132118_0_0_9"/>
<dbReference type="OrthoDB" id="288929at2"/>
<dbReference type="Proteomes" id="UP000008816">
    <property type="component" value="Chromosome"/>
</dbReference>
<dbReference type="GO" id="GO:0003677">
    <property type="term" value="F:DNA binding"/>
    <property type="evidence" value="ECO:0007669"/>
    <property type="project" value="UniProtKB-KW"/>
</dbReference>
<dbReference type="GO" id="GO:0003700">
    <property type="term" value="F:DNA-binding transcription factor activity"/>
    <property type="evidence" value="ECO:0007669"/>
    <property type="project" value="InterPro"/>
</dbReference>
<dbReference type="GO" id="GO:0006355">
    <property type="term" value="P:regulation of DNA-templated transcription"/>
    <property type="evidence" value="ECO:0000318"/>
    <property type="project" value="GO_Central"/>
</dbReference>
<dbReference type="GO" id="GO:0006950">
    <property type="term" value="P:response to stress"/>
    <property type="evidence" value="ECO:0000318"/>
    <property type="project" value="GO_Central"/>
</dbReference>
<dbReference type="FunFam" id="1.10.10.10:FF:000715">
    <property type="entry name" value="HTH-type transcriptional regulator rot"/>
    <property type="match status" value="1"/>
</dbReference>
<dbReference type="Gene3D" id="1.10.10.10">
    <property type="entry name" value="Winged helix-like DNA-binding domain superfamily/Winged helix DNA-binding domain"/>
    <property type="match status" value="1"/>
</dbReference>
<dbReference type="InterPro" id="IPR000835">
    <property type="entry name" value="HTH_MarR-typ"/>
</dbReference>
<dbReference type="InterPro" id="IPR039422">
    <property type="entry name" value="MarR/SlyA-like"/>
</dbReference>
<dbReference type="InterPro" id="IPR016998">
    <property type="entry name" value="Rot"/>
</dbReference>
<dbReference type="InterPro" id="IPR010166">
    <property type="entry name" value="SarA/Rot_dom"/>
</dbReference>
<dbReference type="InterPro" id="IPR055166">
    <property type="entry name" value="Transc_reg_Sar_Rot_HTH"/>
</dbReference>
<dbReference type="InterPro" id="IPR036388">
    <property type="entry name" value="WH-like_DNA-bd_sf"/>
</dbReference>
<dbReference type="InterPro" id="IPR036390">
    <property type="entry name" value="WH_DNA-bd_sf"/>
</dbReference>
<dbReference type="NCBIfam" id="TIGR01889">
    <property type="entry name" value="Staph_reg_Sar"/>
    <property type="match status" value="1"/>
</dbReference>
<dbReference type="PANTHER" id="PTHR33164:SF56">
    <property type="entry name" value="HTH-TYPE TRANSCRIPTIONAL REGULATOR MHQR"/>
    <property type="match status" value="1"/>
</dbReference>
<dbReference type="PANTHER" id="PTHR33164">
    <property type="entry name" value="TRANSCRIPTIONAL REGULATOR, MARR FAMILY"/>
    <property type="match status" value="1"/>
</dbReference>
<dbReference type="Pfam" id="PF22381">
    <property type="entry name" value="Staph_reg_Sar_Rot"/>
    <property type="match status" value="1"/>
</dbReference>
<dbReference type="PIRSF" id="PIRSF032474">
    <property type="entry name" value="TF_HTH_Rot"/>
    <property type="match status" value="1"/>
</dbReference>
<dbReference type="SMART" id="SM00347">
    <property type="entry name" value="HTH_MARR"/>
    <property type="match status" value="1"/>
</dbReference>
<dbReference type="SUPFAM" id="SSF46785">
    <property type="entry name" value="Winged helix' DNA-binding domain"/>
    <property type="match status" value="1"/>
</dbReference>
<proteinExistence type="inferred from homology"/>
<comment type="function">
    <text evidence="2 3 4">Global regulator with both positive and negative effects that mediates modulation of several genes involved in virulence. Negatively regulates the transcription of several known virulence factors such as lipase (geh), hemolysins (hla and hlb) and proteases (splA through splF, sspB and sspC). Positively regulates the expression of sarS and other genes including those encoding cell surface adhesins (clfB, sdrC and spa). Also, modulates the expression of genes not previously implicated in pathogenesis.</text>
</comment>
<comment type="miscellaneous">
    <text>Virulence accessory gene regulator (Agr) and Rot have opposing effects on the expression of selected target genes and agr also controls negatively rot activity by an unknown mechanism.</text>
</comment>
<comment type="similarity">
    <text evidence="5">Belongs to the rot family.</text>
</comment>
<comment type="sequence caution" evidence="5">
    <conflict type="erroneous initiation">
        <sequence resource="EMBL-CDS" id="ABD30944"/>
    </conflict>
</comment>
<gene>
    <name type="primary">rot</name>
    <name type="ordered locus">SAOUHSC_01879</name>
</gene>
<accession>Q9RFJ6</accession>
<accession>Q2FXG8</accession>
<name>ROT_STAA8</name>
<keyword id="KW-0010">Activator</keyword>
<keyword id="KW-0238">DNA-binding</keyword>
<keyword id="KW-1185">Reference proteome</keyword>
<keyword id="KW-0678">Repressor</keyword>
<keyword id="KW-0804">Transcription</keyword>
<keyword id="KW-0805">Transcription regulation</keyword>
<keyword id="KW-0843">Virulence</keyword>